<protein>
    <recommendedName>
        <fullName>Metalloproteinase inhibitor 4</fullName>
    </recommendedName>
    <alternativeName>
        <fullName>Tissue inhibitor of metalloproteinases 4</fullName>
        <shortName>TIMP-4</shortName>
    </alternativeName>
</protein>
<sequence length="224" mass="25723">MPWSPLAALSWALVLRLLALLWPPGRGEACSCAPAHPQQHVCHSALVIRAKISSEKVVPASEDPADTQKMIRYEIKQIKMFKGFEKAKDIQYVYTPFDSSLCGVKLETNSQKQYLLTGQILSDGKVFIHLCNYIEPWEDLSLVQRESLNHHYHQNCGCQITTCYAVPCTISAPDECLWTDWLLERKLYGYQAQHYVCMKHVDGICSWYRGHLHLRKEYVDIVQP</sequence>
<accession>P81556</accession>
<dbReference type="EMBL" id="AABR03031919">
    <property type="status" value="NOT_ANNOTATED_CDS"/>
    <property type="molecule type" value="Genomic_DNA"/>
</dbReference>
<dbReference type="RefSeq" id="NP_001102863.1">
    <property type="nucleotide sequence ID" value="NM_001109393.1"/>
</dbReference>
<dbReference type="SMR" id="P81556"/>
<dbReference type="FunCoup" id="P81556">
    <property type="interactions" value="18"/>
</dbReference>
<dbReference type="STRING" id="10116.ENSRNOP00000010748"/>
<dbReference type="MEROPS" id="I35.004"/>
<dbReference type="PhosphoSitePlus" id="P81556"/>
<dbReference type="PaxDb" id="10116-ENSRNOP00000010748"/>
<dbReference type="GeneID" id="680130"/>
<dbReference type="KEGG" id="rno:680130"/>
<dbReference type="UCSC" id="RGD:69077">
    <property type="organism name" value="rat"/>
</dbReference>
<dbReference type="AGR" id="RGD:69077"/>
<dbReference type="CTD" id="7079"/>
<dbReference type="RGD" id="69077">
    <property type="gene designation" value="Timp4"/>
</dbReference>
<dbReference type="VEuPathDB" id="HostDB:ENSRNOG00000007955"/>
<dbReference type="eggNOG" id="KOG4745">
    <property type="taxonomic scope" value="Eukaryota"/>
</dbReference>
<dbReference type="HOGENOM" id="CLU_084029_0_0_1"/>
<dbReference type="InParanoid" id="P81556"/>
<dbReference type="OrthoDB" id="29961at9989"/>
<dbReference type="PhylomeDB" id="P81556"/>
<dbReference type="TreeFam" id="TF317409"/>
<dbReference type="PRO" id="PR:P81556"/>
<dbReference type="Proteomes" id="UP000002494">
    <property type="component" value="Chromosome 4"/>
</dbReference>
<dbReference type="Bgee" id="ENSRNOG00000007955">
    <property type="expression patterns" value="Expressed in cerebellum and 16 other cell types or tissues"/>
</dbReference>
<dbReference type="GO" id="GO:0031012">
    <property type="term" value="C:extracellular matrix"/>
    <property type="evidence" value="ECO:0000318"/>
    <property type="project" value="GO_Central"/>
</dbReference>
<dbReference type="GO" id="GO:0005615">
    <property type="term" value="C:extracellular space"/>
    <property type="evidence" value="ECO:0000314"/>
    <property type="project" value="RGD"/>
</dbReference>
<dbReference type="GO" id="GO:0030017">
    <property type="term" value="C:sarcomere"/>
    <property type="evidence" value="ECO:0000314"/>
    <property type="project" value="RGD"/>
</dbReference>
<dbReference type="GO" id="GO:0008191">
    <property type="term" value="F:metalloendopeptidase inhibitor activity"/>
    <property type="evidence" value="ECO:0000318"/>
    <property type="project" value="GO_Central"/>
</dbReference>
<dbReference type="GO" id="GO:0008270">
    <property type="term" value="F:zinc ion binding"/>
    <property type="evidence" value="ECO:0000250"/>
    <property type="project" value="UniProtKB"/>
</dbReference>
<dbReference type="GO" id="GO:0051045">
    <property type="term" value="P:negative regulation of membrane protein ectodomain proteolysis"/>
    <property type="evidence" value="ECO:0000318"/>
    <property type="project" value="GO_Central"/>
</dbReference>
<dbReference type="GO" id="GO:0007219">
    <property type="term" value="P:Notch signaling pathway"/>
    <property type="evidence" value="ECO:0000266"/>
    <property type="project" value="RGD"/>
</dbReference>
<dbReference type="GO" id="GO:0042698">
    <property type="term" value="P:ovulation cycle"/>
    <property type="evidence" value="ECO:0000270"/>
    <property type="project" value="RGD"/>
</dbReference>
<dbReference type="GO" id="GO:0034097">
    <property type="term" value="P:response to cytokine"/>
    <property type="evidence" value="ECO:0000270"/>
    <property type="project" value="RGD"/>
</dbReference>
<dbReference type="GO" id="GO:0009725">
    <property type="term" value="P:response to hormone"/>
    <property type="evidence" value="ECO:0000270"/>
    <property type="project" value="RGD"/>
</dbReference>
<dbReference type="GO" id="GO:0032496">
    <property type="term" value="P:response to lipopolysaccharide"/>
    <property type="evidence" value="ECO:0000270"/>
    <property type="project" value="RGD"/>
</dbReference>
<dbReference type="GO" id="GO:0043434">
    <property type="term" value="P:response to peptide hormone"/>
    <property type="evidence" value="ECO:0000270"/>
    <property type="project" value="RGD"/>
</dbReference>
<dbReference type="GO" id="GO:0009410">
    <property type="term" value="P:response to xenobiotic stimulus"/>
    <property type="evidence" value="ECO:0000270"/>
    <property type="project" value="RGD"/>
</dbReference>
<dbReference type="CDD" id="cd03585">
    <property type="entry name" value="NTR_TIMP"/>
    <property type="match status" value="1"/>
</dbReference>
<dbReference type="FunFam" id="3.90.370.10:FF:000001">
    <property type="entry name" value="Metalloproteinase inhibitor 3"/>
    <property type="match status" value="1"/>
</dbReference>
<dbReference type="FunFam" id="2.40.50.120:FF:000012">
    <property type="entry name" value="Metalloproteinase inhibitor 4"/>
    <property type="match status" value="1"/>
</dbReference>
<dbReference type="Gene3D" id="2.40.50.120">
    <property type="match status" value="1"/>
</dbReference>
<dbReference type="Gene3D" id="3.90.370.10">
    <property type="entry name" value="Tissue inhibitor of metalloproteinase-1. Chain B, domain 1"/>
    <property type="match status" value="1"/>
</dbReference>
<dbReference type="InterPro" id="IPR001134">
    <property type="entry name" value="Netrin_domain"/>
</dbReference>
<dbReference type="InterPro" id="IPR001820">
    <property type="entry name" value="TIMP"/>
</dbReference>
<dbReference type="InterPro" id="IPR008993">
    <property type="entry name" value="TIMP-like_OB-fold"/>
</dbReference>
<dbReference type="InterPro" id="IPR027465">
    <property type="entry name" value="TIMP_C"/>
</dbReference>
<dbReference type="InterPro" id="IPR030490">
    <property type="entry name" value="TIMP_CS"/>
</dbReference>
<dbReference type="PANTHER" id="PTHR11844">
    <property type="entry name" value="METALLOPROTEASE INHIBITOR"/>
    <property type="match status" value="1"/>
</dbReference>
<dbReference type="PANTHER" id="PTHR11844:SF26">
    <property type="entry name" value="METALLOPROTEINASE INHIBITOR 4"/>
    <property type="match status" value="1"/>
</dbReference>
<dbReference type="Pfam" id="PF00965">
    <property type="entry name" value="TIMP"/>
    <property type="match status" value="1"/>
</dbReference>
<dbReference type="SMART" id="SM00206">
    <property type="entry name" value="NTR"/>
    <property type="match status" value="1"/>
</dbReference>
<dbReference type="SUPFAM" id="SSF50242">
    <property type="entry name" value="TIMP-like"/>
    <property type="match status" value="1"/>
</dbReference>
<dbReference type="PROSITE" id="PS50189">
    <property type="entry name" value="NTR"/>
    <property type="match status" value="1"/>
</dbReference>
<dbReference type="PROSITE" id="PS00288">
    <property type="entry name" value="TIMP"/>
    <property type="match status" value="1"/>
</dbReference>
<gene>
    <name type="primary">Timp4</name>
</gene>
<feature type="signal peptide" evidence="2">
    <location>
        <begin position="1"/>
        <end position="29"/>
    </location>
</feature>
<feature type="chain" id="PRO_0000034351" description="Metalloproteinase inhibitor 4">
    <location>
        <begin position="30"/>
        <end position="224"/>
    </location>
</feature>
<feature type="domain" description="NTR" evidence="3">
    <location>
        <begin position="30"/>
        <end position="156"/>
    </location>
</feature>
<feature type="region of interest" description="Involved in metalloproteinase-binding" evidence="1">
    <location>
        <begin position="30"/>
        <end position="33"/>
    </location>
</feature>
<feature type="region of interest" description="Involved in metalloproteinase-binding" evidence="1">
    <location>
        <begin position="99"/>
        <end position="100"/>
    </location>
</feature>
<feature type="binding site" evidence="1">
    <location>
        <position position="30"/>
    </location>
    <ligand>
        <name>Zn(2+)</name>
        <dbReference type="ChEBI" id="CHEBI:29105"/>
        <note>ligand shared with metalloproteinase partner</note>
    </ligand>
</feature>
<feature type="site" description="Involved in metalloproteinase-binding" evidence="1">
    <location>
        <position position="69"/>
    </location>
</feature>
<feature type="disulfide bond" evidence="3">
    <location>
        <begin position="30"/>
        <end position="102"/>
    </location>
</feature>
<feature type="disulfide bond" evidence="3">
    <location>
        <begin position="32"/>
        <end position="131"/>
    </location>
</feature>
<feature type="disulfide bond" evidence="3">
    <location>
        <begin position="42"/>
        <end position="156"/>
    </location>
</feature>
<feature type="disulfide bond" evidence="3">
    <location>
        <begin position="158"/>
        <end position="205"/>
    </location>
</feature>
<feature type="disulfide bond" evidence="3">
    <location>
        <begin position="163"/>
        <end position="168"/>
    </location>
</feature>
<feature type="disulfide bond" evidence="3">
    <location>
        <begin position="176"/>
        <end position="197"/>
    </location>
</feature>
<feature type="sequence conflict" description="In Ref. 2." evidence="4" ref="2">
    <original>E</original>
    <variation>G</variation>
    <location>
        <position position="85"/>
    </location>
</feature>
<feature type="sequence conflict" description="In Ref. 2." evidence="4" ref="2">
    <original>S</original>
    <variation>T</variation>
    <location>
        <position position="171"/>
    </location>
</feature>
<feature type="sequence conflict" description="In Ref. 2." evidence="4" ref="2">
    <original>D</original>
    <variation>N</variation>
    <location>
        <position position="180"/>
    </location>
</feature>
<feature type="sequence conflict" description="In Ref. 2." evidence="4" ref="2">
    <original>K</original>
    <variation>M</variation>
    <location>
        <position position="186"/>
    </location>
</feature>
<name>TIMP4_RAT</name>
<evidence type="ECO:0000250" key="1">
    <source>
        <dbReference type="UniProtKB" id="P16035"/>
    </source>
</evidence>
<evidence type="ECO:0000255" key="2"/>
<evidence type="ECO:0000255" key="3">
    <source>
        <dbReference type="PROSITE-ProRule" id="PRU00295"/>
    </source>
</evidence>
<evidence type="ECO:0000305" key="4"/>
<reference key="1">
    <citation type="journal article" date="2004" name="Nature">
        <title>Genome sequence of the Brown Norway rat yields insights into mammalian evolution.</title>
        <authorList>
            <person name="Gibbs R.A."/>
            <person name="Weinstock G.M."/>
            <person name="Metzker M.L."/>
            <person name="Muzny D.M."/>
            <person name="Sodergren E.J."/>
            <person name="Scherer S."/>
            <person name="Scott G."/>
            <person name="Steffen D."/>
            <person name="Worley K.C."/>
            <person name="Burch P.E."/>
            <person name="Okwuonu G."/>
            <person name="Hines S."/>
            <person name="Lewis L."/>
            <person name="Deramo C."/>
            <person name="Delgado O."/>
            <person name="Dugan-Rocha S."/>
            <person name="Miner G."/>
            <person name="Morgan M."/>
            <person name="Hawes A."/>
            <person name="Gill R."/>
            <person name="Holt R.A."/>
            <person name="Adams M.D."/>
            <person name="Amanatides P.G."/>
            <person name="Baden-Tillson H."/>
            <person name="Barnstead M."/>
            <person name="Chin S."/>
            <person name="Evans C.A."/>
            <person name="Ferriera S."/>
            <person name="Fosler C."/>
            <person name="Glodek A."/>
            <person name="Gu Z."/>
            <person name="Jennings D."/>
            <person name="Kraft C.L."/>
            <person name="Nguyen T."/>
            <person name="Pfannkoch C.M."/>
            <person name="Sitter C."/>
            <person name="Sutton G.G."/>
            <person name="Venter J.C."/>
            <person name="Woodage T."/>
            <person name="Smith D."/>
            <person name="Lee H.-M."/>
            <person name="Gustafson E."/>
            <person name="Cahill P."/>
            <person name="Kana A."/>
            <person name="Doucette-Stamm L."/>
            <person name="Weinstock K."/>
            <person name="Fechtel K."/>
            <person name="Weiss R.B."/>
            <person name="Dunn D.M."/>
            <person name="Green E.D."/>
            <person name="Blakesley R.W."/>
            <person name="Bouffard G.G."/>
            <person name="De Jong P.J."/>
            <person name="Osoegawa K."/>
            <person name="Zhu B."/>
            <person name="Marra M."/>
            <person name="Schein J."/>
            <person name="Bosdet I."/>
            <person name="Fjell C."/>
            <person name="Jones S."/>
            <person name="Krzywinski M."/>
            <person name="Mathewson C."/>
            <person name="Siddiqui A."/>
            <person name="Wye N."/>
            <person name="McPherson J."/>
            <person name="Zhao S."/>
            <person name="Fraser C.M."/>
            <person name="Shetty J."/>
            <person name="Shatsman S."/>
            <person name="Geer K."/>
            <person name="Chen Y."/>
            <person name="Abramzon S."/>
            <person name="Nierman W.C."/>
            <person name="Havlak P.H."/>
            <person name="Chen R."/>
            <person name="Durbin K.J."/>
            <person name="Egan A."/>
            <person name="Ren Y."/>
            <person name="Song X.-Z."/>
            <person name="Li B."/>
            <person name="Liu Y."/>
            <person name="Qin X."/>
            <person name="Cawley S."/>
            <person name="Cooney A.J."/>
            <person name="D'Souza L.M."/>
            <person name="Martin K."/>
            <person name="Wu J.Q."/>
            <person name="Gonzalez-Garay M.L."/>
            <person name="Jackson A.R."/>
            <person name="Kalafus K.J."/>
            <person name="McLeod M.P."/>
            <person name="Milosavljevic A."/>
            <person name="Virk D."/>
            <person name="Volkov A."/>
            <person name="Wheeler D.A."/>
            <person name="Zhang Z."/>
            <person name="Bailey J.A."/>
            <person name="Eichler E.E."/>
            <person name="Tuzun E."/>
            <person name="Birney E."/>
            <person name="Mongin E."/>
            <person name="Ureta-Vidal A."/>
            <person name="Woodwark C."/>
            <person name="Zdobnov E."/>
            <person name="Bork P."/>
            <person name="Suyama M."/>
            <person name="Torrents D."/>
            <person name="Alexandersson M."/>
            <person name="Trask B.J."/>
            <person name="Young J.M."/>
            <person name="Huang H."/>
            <person name="Wang H."/>
            <person name="Xing H."/>
            <person name="Daniels S."/>
            <person name="Gietzen D."/>
            <person name="Schmidt J."/>
            <person name="Stevens K."/>
            <person name="Vitt U."/>
            <person name="Wingrove J."/>
            <person name="Camara F."/>
            <person name="Mar Alba M."/>
            <person name="Abril J.F."/>
            <person name="Guigo R."/>
            <person name="Smit A."/>
            <person name="Dubchak I."/>
            <person name="Rubin E.M."/>
            <person name="Couronne O."/>
            <person name="Poliakov A."/>
            <person name="Huebner N."/>
            <person name="Ganten D."/>
            <person name="Goesele C."/>
            <person name="Hummel O."/>
            <person name="Kreitler T."/>
            <person name="Lee Y.-A."/>
            <person name="Monti J."/>
            <person name="Schulz H."/>
            <person name="Zimdahl H."/>
            <person name="Himmelbauer H."/>
            <person name="Lehrach H."/>
            <person name="Jacob H.J."/>
            <person name="Bromberg S."/>
            <person name="Gullings-Handley J."/>
            <person name="Jensen-Seaman M.I."/>
            <person name="Kwitek A.E."/>
            <person name="Lazar J."/>
            <person name="Pasko D."/>
            <person name="Tonellato P.J."/>
            <person name="Twigger S."/>
            <person name="Ponting C.P."/>
            <person name="Duarte J.M."/>
            <person name="Rice S."/>
            <person name="Goodstadt L."/>
            <person name="Beatson S.A."/>
            <person name="Emes R.D."/>
            <person name="Winter E.E."/>
            <person name="Webber C."/>
            <person name="Brandt P."/>
            <person name="Nyakatura G."/>
            <person name="Adetobi M."/>
            <person name="Chiaromonte F."/>
            <person name="Elnitski L."/>
            <person name="Eswara P."/>
            <person name="Hardison R.C."/>
            <person name="Hou M."/>
            <person name="Kolbe D."/>
            <person name="Makova K."/>
            <person name="Miller W."/>
            <person name="Nekrutenko A."/>
            <person name="Riemer C."/>
            <person name="Schwartz S."/>
            <person name="Taylor J."/>
            <person name="Yang S."/>
            <person name="Zhang Y."/>
            <person name="Lindpaintner K."/>
            <person name="Andrews T.D."/>
            <person name="Caccamo M."/>
            <person name="Clamp M."/>
            <person name="Clarke L."/>
            <person name="Curwen V."/>
            <person name="Durbin R.M."/>
            <person name="Eyras E."/>
            <person name="Searle S.M."/>
            <person name="Cooper G.M."/>
            <person name="Batzoglou S."/>
            <person name="Brudno M."/>
            <person name="Sidow A."/>
            <person name="Stone E.A."/>
            <person name="Payseur B.A."/>
            <person name="Bourque G."/>
            <person name="Lopez-Otin C."/>
            <person name="Puente X.S."/>
            <person name="Chakrabarti K."/>
            <person name="Chatterji S."/>
            <person name="Dewey C."/>
            <person name="Pachter L."/>
            <person name="Bray N."/>
            <person name="Yap V.B."/>
            <person name="Caspi A."/>
            <person name="Tesler G."/>
            <person name="Pevzner P.A."/>
            <person name="Haussler D."/>
            <person name="Roskin K.M."/>
            <person name="Baertsch R."/>
            <person name="Clawson H."/>
            <person name="Furey T.S."/>
            <person name="Hinrichs A.S."/>
            <person name="Karolchik D."/>
            <person name="Kent W.J."/>
            <person name="Rosenbloom K.R."/>
            <person name="Trumbower H."/>
            <person name="Weirauch M."/>
            <person name="Cooper D.N."/>
            <person name="Stenson P.D."/>
            <person name="Ma B."/>
            <person name="Brent M."/>
            <person name="Arumugam M."/>
            <person name="Shteynberg D."/>
            <person name="Copley R.R."/>
            <person name="Taylor M.S."/>
            <person name="Riethman H."/>
            <person name="Mudunuri U."/>
            <person name="Peterson J."/>
            <person name="Guyer M."/>
            <person name="Felsenfeld A."/>
            <person name="Old S."/>
            <person name="Mockrin S."/>
            <person name="Collins F.S."/>
        </authorList>
    </citation>
    <scope>NUCLEOTIDE SEQUENCE [LARGE SCALE GENOMIC DNA]</scope>
    <source>
        <strain>Brown Norway</strain>
    </source>
</reference>
<reference key="2">
    <citation type="journal article" date="1998" name="Matrix Biol.">
        <title>Molecular cloning and expression analysis of the cDNA encoding rat tissue inhibitor of metalloproteinase-4.</title>
        <authorList>
            <person name="Wu I."/>
            <person name="Moses M.A."/>
        </authorList>
    </citation>
    <scope>NUCLEOTIDE SEQUENCE [MRNA]</scope>
</reference>
<organism>
    <name type="scientific">Rattus norvegicus</name>
    <name type="common">Rat</name>
    <dbReference type="NCBI Taxonomy" id="10116"/>
    <lineage>
        <taxon>Eukaryota</taxon>
        <taxon>Metazoa</taxon>
        <taxon>Chordata</taxon>
        <taxon>Craniata</taxon>
        <taxon>Vertebrata</taxon>
        <taxon>Euteleostomi</taxon>
        <taxon>Mammalia</taxon>
        <taxon>Eutheria</taxon>
        <taxon>Euarchontoglires</taxon>
        <taxon>Glires</taxon>
        <taxon>Rodentia</taxon>
        <taxon>Myomorpha</taxon>
        <taxon>Muroidea</taxon>
        <taxon>Muridae</taxon>
        <taxon>Murinae</taxon>
        <taxon>Rattus</taxon>
    </lineage>
</organism>
<keyword id="KW-1015">Disulfide bond</keyword>
<keyword id="KW-0479">Metal-binding</keyword>
<keyword id="KW-0481">Metalloenzyme inhibitor</keyword>
<keyword id="KW-0483">Metalloprotease inhibitor</keyword>
<keyword id="KW-0646">Protease inhibitor</keyword>
<keyword id="KW-1185">Reference proteome</keyword>
<keyword id="KW-0964">Secreted</keyword>
<keyword id="KW-0732">Signal</keyword>
<keyword id="KW-0862">Zinc</keyword>
<proteinExistence type="evidence at transcript level"/>
<comment type="function">
    <text>Complexes with metalloproteinases (such as collagenases) and irreversibly inactivates them by binding to their catalytic zinc cofactor.</text>
</comment>
<comment type="subcellular location">
    <subcellularLocation>
        <location>Secreted</location>
    </subcellularLocation>
</comment>
<comment type="tissue specificity">
    <text>Expressed in retina, smooth muscle, skin, pancreas, skeletal muscle, heart, brain, lung, kidney and testis. Not found in cartilage, spleen and liver.</text>
</comment>
<comment type="similarity">
    <text evidence="4">Belongs to the protease inhibitor I35 (TIMP) family.</text>
</comment>